<reference key="1">
    <citation type="journal article" date="2005" name="Arch. Virol.">
        <title>The complete nucleotide sequence of a Spanish isolate of Citrus psorosis virus: comparative analysis with other ophioviruses.</title>
        <authorList>
            <person name="Martin S."/>
            <person name="Lopez C."/>
            <person name="Garcia M.L."/>
            <person name="Naum-Ongania G."/>
            <person name="Grau O."/>
            <person name="Flores R."/>
            <person name="Moreno P."/>
            <person name="Guerri J."/>
        </authorList>
    </citation>
    <scope>NUCLEOTIDE SEQUENCE [GENOMIC RNA]</scope>
</reference>
<comment type="function">
    <text evidence="1">Displays RNA-directed RNA polymerase, mRNA guanylyl transferase, mRNA (guanine-N(7)-)-methyltransferase and poly(A) synthetase activities. The viral mRNA guanylyl transferase displays a different biochemical reaction than the cellular enzyme. The template is composed of the viral RNA tightly encapsidated by the nucleoprotein (N). Functions either as transcriptase or as replicase (By similarity).</text>
</comment>
<comment type="catalytic activity">
    <reaction evidence="3">
        <text>RNA(n) + a ribonucleoside 5'-triphosphate = RNA(n+1) + diphosphate</text>
        <dbReference type="Rhea" id="RHEA:21248"/>
        <dbReference type="Rhea" id="RHEA-COMP:14527"/>
        <dbReference type="Rhea" id="RHEA-COMP:17342"/>
        <dbReference type="ChEBI" id="CHEBI:33019"/>
        <dbReference type="ChEBI" id="CHEBI:61557"/>
        <dbReference type="ChEBI" id="CHEBI:140395"/>
        <dbReference type="EC" id="2.7.7.48"/>
    </reaction>
</comment>
<comment type="catalytic activity">
    <reaction>
        <text>a 5'-end (5'-triphosphoguanosine)-ribonucleoside in mRNA + S-adenosyl-L-methionine = a 5'-end (N(7)-methyl 5'-triphosphoguanosine)-ribonucleoside in mRNA + S-adenosyl-L-homocysteine</text>
        <dbReference type="Rhea" id="RHEA:67008"/>
        <dbReference type="Rhea" id="RHEA-COMP:17166"/>
        <dbReference type="Rhea" id="RHEA-COMP:17167"/>
        <dbReference type="ChEBI" id="CHEBI:57856"/>
        <dbReference type="ChEBI" id="CHEBI:59789"/>
        <dbReference type="ChEBI" id="CHEBI:156461"/>
        <dbReference type="ChEBI" id="CHEBI:167617"/>
        <dbReference type="EC" id="2.1.1.56"/>
    </reaction>
</comment>
<organism>
    <name type="scientific">Citrus psorosis virus (isolate Spain/P-121)</name>
    <name type="common">CPsV</name>
    <name type="synonym">Citrus ringspot virus</name>
    <dbReference type="NCBI Taxonomy" id="652963"/>
    <lineage>
        <taxon>Viruses</taxon>
        <taxon>Riboviria</taxon>
        <taxon>Orthornavirae</taxon>
        <taxon>Negarnaviricota</taxon>
        <taxon>Haploviricotina</taxon>
        <taxon>Milneviricetes</taxon>
        <taxon>Serpentovirales</taxon>
        <taxon>Aspiviridae</taxon>
        <taxon>Ophiovirus</taxon>
        <taxon>Ophiovirus citri</taxon>
    </lineage>
</organism>
<proteinExistence type="inferred from homology"/>
<protein>
    <recommendedName>
        <fullName>RNA-directed RNA polymerase L</fullName>
        <shortName>Protein L</shortName>
    </recommendedName>
    <alternativeName>
        <fullName>Large structural protein</fullName>
    </alternativeName>
    <alternativeName>
        <fullName>Replicase</fullName>
    </alternativeName>
    <alternativeName>
        <fullName>Transcriptase</fullName>
    </alternativeName>
    <domain>
        <recommendedName>
            <fullName>RNA-directed RNA polymerase</fullName>
            <ecNumber>2.7.7.48</ecNumber>
        </recommendedName>
    </domain>
    <domain>
        <recommendedName>
            <fullName>mRNA (guanine-N(7))-methyltransferase</fullName>
            <ecNumber>2.1.1.56</ecNumber>
        </recommendedName>
    </domain>
    <domain>
        <recommendedName>
            <fullName>mRNA guanylyltransferase</fullName>
            <ecNumber>2.7.7.-</ecNumber>
        </recommendedName>
    </domain>
</protein>
<dbReference type="EC" id="2.7.7.48"/>
<dbReference type="EC" id="2.1.1.56"/>
<dbReference type="EC" id="2.7.7.-"/>
<dbReference type="EMBL" id="AY654892">
    <property type="protein sequence ID" value="AAT72907.1"/>
    <property type="molecule type" value="Genomic_DNA"/>
</dbReference>
<dbReference type="KEGG" id="vg:3077255"/>
<dbReference type="Proteomes" id="UP000009269">
    <property type="component" value="Genome"/>
</dbReference>
<dbReference type="GO" id="GO:0005524">
    <property type="term" value="F:ATP binding"/>
    <property type="evidence" value="ECO:0007669"/>
    <property type="project" value="UniProtKB-KW"/>
</dbReference>
<dbReference type="GO" id="GO:0004482">
    <property type="term" value="F:mRNA 5'-cap (guanine-N7-)-methyltransferase activity"/>
    <property type="evidence" value="ECO:0007669"/>
    <property type="project" value="UniProtKB-EC"/>
</dbReference>
<dbReference type="GO" id="GO:0003968">
    <property type="term" value="F:RNA-directed RNA polymerase activity"/>
    <property type="evidence" value="ECO:0007669"/>
    <property type="project" value="UniProtKB-KW"/>
</dbReference>
<dbReference type="InterPro" id="IPR014023">
    <property type="entry name" value="Mononeg_RNA_pol_cat"/>
</dbReference>
<dbReference type="PROSITE" id="PS50526">
    <property type="entry name" value="RDRP_SSRNA_NEG_NONSEG"/>
    <property type="match status" value="1"/>
</dbReference>
<evidence type="ECO:0000250" key="1"/>
<evidence type="ECO:0000255" key="2"/>
<evidence type="ECO:0000255" key="3">
    <source>
        <dbReference type="PROSITE-ProRule" id="PRU00539"/>
    </source>
</evidence>
<name>L_CPSVP</name>
<sequence length="2416" mass="280374">MEWSDEKASSKITLEDEIEIITSDIVASEDTIIELAKKEEEAKKALEARKGYAEEYIKLIEEMKNYPSAYSILSGKKEEYIMLRTAQDHEKSLEPKKEKIKYTSMIKYWIKWDHLAYIGTYVDRPALISRLDSPYKTITNETIEDFLYREDYPEKFGVRAKIDLFRLREFVGQEKWSSKIKQGNQKETEIWVSYLKETKNKSKKLETLLEYGKNMADEELLSNREKITGKMQKTYKEAWKIEPSEDTQTSLWFINLLEIIIFKIKMTYSQLLNRIESVSESMEREGRKIITKVNLDGSSTTTLVVNNAQTNEKIKTEIFISNTFHAIKYNGVILIGDNTLLKFVLSTEENELNMNIVKDYNFMKGEKSDNFFIDFMMRLKKVPQPLRTLIAATYETVCLMMADHKCSSSTLPIIDAVIELMKLDKKIGEELLSICMTSDGVXCIKASTLAKMNTYAEVNELEGLRKYIQRTNRNHDVSKESIERLRCMMRMKIITNYIKKFGVVPQMTCNSGLLEQELNLMASGGSYNNHIIRNTSHYKDVKLGKMLQPGNEVNISSRVIDKACTKDEYDFSGNSVKELVYYITKNDLVDLIDEIEIGKVYEENKNQDRETKCFFRKDKELARMQKYKICRLIEKEKELKTEGRFYGVASFKLKIYISIIMEMIKRAMKLIPGQMMTMTEDERRTVMHRMSVMLEEKDAYTLFLDYSGHNTSQRPENNLFILEEIADMYGFEENSIERKRLTQVVYLFNELEILYEHLFSDMVVWSRRQKGAIEGWFGPLWGIQSQLMLDDMMVSMGIEKYIGTTYSDDSCGVFIKKNLDQEELNRMIEYIQSYSLKMGLLVKLSQTQITNGRCSMLKNHYYFDKPIDTSYKRIMSISPNSDILWGNDSERVSVIDSAYTSSVLRADDNYIQTVIRNFRIMIEIEKDVIRWALFYDLELDPRFINLRGSLSTLGKIYRKIVDEASELRELKEIENSMPNEDEIVTQFFLFHIKNRKLLKLTLALMYLPSTCYGHALTSMVDSFISGYSYSNVKRLSYVESLFNDKKDKVFIYSLVRLSENAISYVGEPFPMTGGRYDTKTILKDELKQLLKHKVQNNELKEMLNSFSEDKEHLFKAVLVHTFEKCFSHRIASKFYECSIFNYINELYAKINNSTTMSYLVGKKKMNKLWNKAWKVNHKIEYKFQGNIINEIKSDPSYFGLIMGRNKVDKRIVQNNEMKYFRMNFLNIEELPIIGKMSADNLTGQLRCIIKPMRVYSKIKGLRLPGPVRTAINITKFDRDLEIEGMFQNKLIFMAYELVRYVKWMIFDMEKYNKQDNTQAIKSLRKLTDITIGTFSNAKINDIEEAVVCPKGGRYFHRALSGGFNPKTGDLSSNMLSSRVEVTGLDRLTNETGGVDNNINLQLVITALKVQLALIGYTNNETISIGLDSDVKYFARDVTFMLDQIKSEKELECDLGLSHRFDSMTLDKLNEKRTLYHNFSHFVSVNEDIAGKFIDHKTILPSSKIEEISSFQSLNKYMQDMEILVPTQIPENIMKELVPNLNSYGSIDRYLEEFYKFYKGLNIIGNESFTKAVVRSIINKELFDRKNIEGKDWLKEIELTGFSYGYRKSLLKIFIVSCCMVFRVEEPTGNTLKITIFEDKTKINCLNNIKRIKNSEAHLHINDKRISDLINMAFPLVGYQLKDVFVAVREIMEEHNGKIIDGTKVIQYFNVENTSYASQLEEENCGRISYSNIVLKPSDLSDEKQFIASIKAFEMIATLNCKPQHVSSPTKSDVYPSAKALLDYLINSNVVSVDDKIADIFAGRGDFHLIMDNMGITHTSISRNDGYNLINRIPGMKEIKANIDMTYSENYGQYLDHDVFILDISHFTGDPNNIIRMIDDILAVGKKVIIRWNSIAPMCTKLLYNFVIKRHHKIDILMPTIESPGYIYLLFNGGFYEPKEILEGENSKKEKKTYNENIITSNMVLELNRIRKTSILNCSGIKVSDHTQELISDDKLISILEENESKSYISNDIEMRIEEGEKLEELLMVLNPSDKLLGLENIIRQEIRVEEAERGAKSLKYFKRLIAETKPISGMKKIKLDKNFLKWMIRENKMKLENDKLIIVEGVKNGHCKEIKKTIDLIINDKNTSKMNQEAWTCVKAGINQFISVEGEETECDMKVILMMIQGSTEYKSRFFSYDRILRLAHMASDAIKTGTMAESILILSGLRSGVLSSLKKNKGKALRYDCLNIKLIMNRMLVLSEERNIIIQSSNLRLSEIVKDILLFRKIGQGDKRVKKSIRGKFKRGEKNNKHIISWFDEDEELELKCTELLEQREIEEEILKLREFDRLEDYLESQGINELFSAITDELSKEGVRMEMTEEHLAQGIDEQANILSEGFKSFLGVQDEEVEKNRNMTVEEMRKLVDDDDDCEYLSDEE</sequence>
<keyword id="KW-0067">ATP-binding</keyword>
<keyword id="KW-0175">Coiled coil</keyword>
<keyword id="KW-0489">Methyltransferase</keyword>
<keyword id="KW-0506">mRNA capping</keyword>
<keyword id="KW-0507">mRNA processing</keyword>
<keyword id="KW-0511">Multifunctional enzyme</keyword>
<keyword id="KW-0547">Nucleotide-binding</keyword>
<keyword id="KW-0548">Nucleotidyltransferase</keyword>
<keyword id="KW-1185">Reference proteome</keyword>
<keyword id="KW-0696">RNA-directed RNA polymerase</keyword>
<keyword id="KW-0949">S-adenosyl-L-methionine</keyword>
<keyword id="KW-0808">Transferase</keyword>
<keyword id="KW-0693">Viral RNA replication</keyword>
<gene>
    <name type="primary">L</name>
</gene>
<feature type="chain" id="PRO_0000391479" description="RNA-directed RNA polymerase L">
    <location>
        <begin position="1"/>
        <end position="2416"/>
    </location>
</feature>
<feature type="domain" description="RdRp catalytic" evidence="3">
    <location>
        <begin position="698"/>
        <end position="864"/>
    </location>
</feature>
<feature type="coiled-coil region" evidence="2">
    <location>
        <begin position="27"/>
        <end position="59"/>
    </location>
</feature>
<feature type="coiled-coil region" evidence="2">
    <location>
        <begin position="1082"/>
        <end position="1115"/>
    </location>
</feature>
<organismHost>
    <name type="scientific">Citrus aurantiifolia</name>
    <name type="common">Key lime</name>
    <name type="synonym">Limonia aurantifolia</name>
    <dbReference type="NCBI Taxonomy" id="159033"/>
</organismHost>
<organismHost>
    <name type="scientific">Citrus limon</name>
    <name type="common">Lemon</name>
    <name type="synonym">Citrus medica var. limon</name>
    <dbReference type="NCBI Taxonomy" id="2708"/>
</organismHost>
<organismHost>
    <name type="scientific">Citrus paradisi</name>
    <name type="common">Grapefruit</name>
    <dbReference type="NCBI Taxonomy" id="37656"/>
</organismHost>
<accession>Q6DN67</accession>